<dbReference type="EMBL" id="AE005673">
    <property type="protein sequence ID" value="AAK23849.1"/>
    <property type="molecule type" value="Genomic_DNA"/>
</dbReference>
<dbReference type="PIR" id="E87481">
    <property type="entry name" value="E87481"/>
</dbReference>
<dbReference type="RefSeq" id="NP_420681.1">
    <property type="nucleotide sequence ID" value="NC_002696.2"/>
</dbReference>
<dbReference type="SMR" id="Q9A752"/>
<dbReference type="STRING" id="190650.CC_1874"/>
<dbReference type="EnsemblBacteria" id="AAK23849">
    <property type="protein sequence ID" value="AAK23849"/>
    <property type="gene ID" value="CC_1874"/>
</dbReference>
<dbReference type="KEGG" id="ccr:CC_1874"/>
<dbReference type="PATRIC" id="fig|190650.5.peg.1891"/>
<dbReference type="eggNOG" id="COG1186">
    <property type="taxonomic scope" value="Bacteria"/>
</dbReference>
<dbReference type="HOGENOM" id="CLU_036856_6_0_5"/>
<dbReference type="BioCyc" id="CAULO:CC1874-MONOMER"/>
<dbReference type="Proteomes" id="UP000001816">
    <property type="component" value="Chromosome"/>
</dbReference>
<dbReference type="GO" id="GO:0005737">
    <property type="term" value="C:cytoplasm"/>
    <property type="evidence" value="ECO:0007669"/>
    <property type="project" value="UniProtKB-SubCell"/>
</dbReference>
<dbReference type="GO" id="GO:0016149">
    <property type="term" value="F:translation release factor activity, codon specific"/>
    <property type="evidence" value="ECO:0007669"/>
    <property type="project" value="UniProtKB-UniRule"/>
</dbReference>
<dbReference type="FunFam" id="3.30.160.20:FF:000010">
    <property type="entry name" value="Peptide chain release factor 2"/>
    <property type="match status" value="1"/>
</dbReference>
<dbReference type="Gene3D" id="3.30.160.20">
    <property type="match status" value="1"/>
</dbReference>
<dbReference type="Gene3D" id="3.30.70.1660">
    <property type="match status" value="1"/>
</dbReference>
<dbReference type="Gene3D" id="1.20.58.410">
    <property type="entry name" value="Release factor"/>
    <property type="match status" value="1"/>
</dbReference>
<dbReference type="HAMAP" id="MF_00094">
    <property type="entry name" value="Rel_fac_2"/>
    <property type="match status" value="1"/>
</dbReference>
<dbReference type="InterPro" id="IPR005139">
    <property type="entry name" value="PCRF"/>
</dbReference>
<dbReference type="InterPro" id="IPR000352">
    <property type="entry name" value="Pep_chain_release_fac_I"/>
</dbReference>
<dbReference type="InterPro" id="IPR045853">
    <property type="entry name" value="Pep_chain_release_fac_I_sf"/>
</dbReference>
<dbReference type="InterPro" id="IPR004374">
    <property type="entry name" value="PrfB"/>
</dbReference>
<dbReference type="NCBIfam" id="TIGR00020">
    <property type="entry name" value="prfB"/>
    <property type="match status" value="1"/>
</dbReference>
<dbReference type="PANTHER" id="PTHR43116:SF3">
    <property type="entry name" value="CLASS I PEPTIDE CHAIN RELEASE FACTOR"/>
    <property type="match status" value="1"/>
</dbReference>
<dbReference type="PANTHER" id="PTHR43116">
    <property type="entry name" value="PEPTIDE CHAIN RELEASE FACTOR 2"/>
    <property type="match status" value="1"/>
</dbReference>
<dbReference type="Pfam" id="PF03462">
    <property type="entry name" value="PCRF"/>
    <property type="match status" value="1"/>
</dbReference>
<dbReference type="Pfam" id="PF00472">
    <property type="entry name" value="RF-1"/>
    <property type="match status" value="1"/>
</dbReference>
<dbReference type="SMART" id="SM00937">
    <property type="entry name" value="PCRF"/>
    <property type="match status" value="1"/>
</dbReference>
<dbReference type="SUPFAM" id="SSF75620">
    <property type="entry name" value="Release factor"/>
    <property type="match status" value="1"/>
</dbReference>
<dbReference type="PROSITE" id="PS00745">
    <property type="entry name" value="RF_PROK_I"/>
    <property type="match status" value="1"/>
</dbReference>
<keyword id="KW-0963">Cytoplasm</keyword>
<keyword id="KW-0488">Methylation</keyword>
<keyword id="KW-0648">Protein biosynthesis</keyword>
<keyword id="KW-1185">Reference proteome</keyword>
<name>RF2_CAUVC</name>
<gene>
    <name evidence="1" type="primary">prfB</name>
    <name type="ordered locus">CC_1874</name>
</gene>
<comment type="function">
    <text evidence="1">Peptide chain release factor 2 directs the termination of translation in response to the peptide chain termination codons UGA and UAA.</text>
</comment>
<comment type="subcellular location">
    <subcellularLocation>
        <location evidence="1">Cytoplasm</location>
    </subcellularLocation>
</comment>
<comment type="PTM">
    <text evidence="1">Methylated by PrmC. Methylation increases the termination efficiency of RF2.</text>
</comment>
<comment type="similarity">
    <text evidence="1">Belongs to the prokaryotic/mitochondrial release factor family.</text>
</comment>
<protein>
    <recommendedName>
        <fullName evidence="1">Peptide chain release factor 2</fullName>
        <shortName evidence="1">RF-2</shortName>
    </recommendedName>
</protein>
<reference key="1">
    <citation type="journal article" date="2001" name="Proc. Natl. Acad. Sci. U.S.A.">
        <title>Complete genome sequence of Caulobacter crescentus.</title>
        <authorList>
            <person name="Nierman W.C."/>
            <person name="Feldblyum T.V."/>
            <person name="Laub M.T."/>
            <person name="Paulsen I.T."/>
            <person name="Nelson K.E."/>
            <person name="Eisen J.A."/>
            <person name="Heidelberg J.F."/>
            <person name="Alley M.R.K."/>
            <person name="Ohta N."/>
            <person name="Maddock J.R."/>
            <person name="Potocka I."/>
            <person name="Nelson W.C."/>
            <person name="Newton A."/>
            <person name="Stephens C."/>
            <person name="Phadke N.D."/>
            <person name="Ely B."/>
            <person name="DeBoy R.T."/>
            <person name="Dodson R.J."/>
            <person name="Durkin A.S."/>
            <person name="Gwinn M.L."/>
            <person name="Haft D.H."/>
            <person name="Kolonay J.F."/>
            <person name="Smit J."/>
            <person name="Craven M.B."/>
            <person name="Khouri H.M."/>
            <person name="Shetty J."/>
            <person name="Berry K.J."/>
            <person name="Utterback T.R."/>
            <person name="Tran K."/>
            <person name="Wolf A.M."/>
            <person name="Vamathevan J.J."/>
            <person name="Ermolaeva M.D."/>
            <person name="White O."/>
            <person name="Salzberg S.L."/>
            <person name="Venter J.C."/>
            <person name="Shapiro L."/>
            <person name="Fraser C.M."/>
        </authorList>
    </citation>
    <scope>NUCLEOTIDE SEQUENCE [LARGE SCALE GENOMIC DNA]</scope>
    <source>
        <strain>ATCC 19089 / CIP 103742 / CB 15</strain>
    </source>
</reference>
<accession>Q9A752</accession>
<feature type="chain" id="PRO_0000166810" description="Peptide chain release factor 2">
    <location>
        <begin position="1"/>
        <end position="371"/>
    </location>
</feature>
<feature type="modified residue" description="N5-methylglutamine" evidence="1">
    <location>
        <position position="247"/>
    </location>
</feature>
<sequence>MSRPLRPTSSSPWDCSGGVFDWDVALRKLDELNARVEDPTLWDRPSEAQAVSRERANLAAKVEAVQSIERDLKDALEYAELAEMESDEDSLNDARAQLKSLKERAGRAELEALLSGEADGNDCYVEINSGAGGTESCDWAGILLRMYTRWANAHGMTTELIEETDGDQAGIKSATLLVKGANAYGWLKTEAGVHRLVRISPYDSSARRHTSFASAWVYPVVDDNIEIEINPSDVRTDTYRASGAGGQHINKTDSAVRLTHIPTGIAVACQAGRSQHQNREEAWKMLRARLYEAELQKREAAQQALEDQKTDIGWGHQIRSYVLQPYQMVKDLRTNVETSDTQGVLDGDLDAFMAASLAQRVGHTRDGGEAS</sequence>
<evidence type="ECO:0000255" key="1">
    <source>
        <dbReference type="HAMAP-Rule" id="MF_00094"/>
    </source>
</evidence>
<organism>
    <name type="scientific">Caulobacter vibrioides (strain ATCC 19089 / CIP 103742 / CB 15)</name>
    <name type="common">Caulobacter crescentus</name>
    <dbReference type="NCBI Taxonomy" id="190650"/>
    <lineage>
        <taxon>Bacteria</taxon>
        <taxon>Pseudomonadati</taxon>
        <taxon>Pseudomonadota</taxon>
        <taxon>Alphaproteobacteria</taxon>
        <taxon>Caulobacterales</taxon>
        <taxon>Caulobacteraceae</taxon>
        <taxon>Caulobacter</taxon>
    </lineage>
</organism>
<proteinExistence type="inferred from homology"/>